<dbReference type="EC" id="3.2.2.-" evidence="1"/>
<dbReference type="EMBL" id="CP000703">
    <property type="protein sequence ID" value="ABQ50148.1"/>
    <property type="molecule type" value="Genomic_DNA"/>
</dbReference>
<dbReference type="RefSeq" id="WP_000348300.1">
    <property type="nucleotide sequence ID" value="NC_009487.1"/>
</dbReference>
<dbReference type="SMR" id="A5IVC5"/>
<dbReference type="KEGG" id="saj:SaurJH9_2368"/>
<dbReference type="HOGENOM" id="CLU_060471_2_0_9"/>
<dbReference type="GO" id="GO:0003905">
    <property type="term" value="F:alkylbase DNA N-glycosylase activity"/>
    <property type="evidence" value="ECO:0007669"/>
    <property type="project" value="InterPro"/>
</dbReference>
<dbReference type="GO" id="GO:0003677">
    <property type="term" value="F:DNA binding"/>
    <property type="evidence" value="ECO:0007669"/>
    <property type="project" value="InterPro"/>
</dbReference>
<dbReference type="GO" id="GO:0006284">
    <property type="term" value="P:base-excision repair"/>
    <property type="evidence" value="ECO:0007669"/>
    <property type="project" value="InterPro"/>
</dbReference>
<dbReference type="CDD" id="cd00540">
    <property type="entry name" value="AAG"/>
    <property type="match status" value="1"/>
</dbReference>
<dbReference type="FunFam" id="3.10.300.10:FF:000001">
    <property type="entry name" value="Putative 3-methyladenine DNA glycosylase"/>
    <property type="match status" value="1"/>
</dbReference>
<dbReference type="Gene3D" id="3.10.300.10">
    <property type="entry name" value="Methylpurine-DNA glycosylase (MPG)"/>
    <property type="match status" value="1"/>
</dbReference>
<dbReference type="HAMAP" id="MF_00527">
    <property type="entry name" value="3MGH"/>
    <property type="match status" value="1"/>
</dbReference>
<dbReference type="InterPro" id="IPR011034">
    <property type="entry name" value="Formyl_transferase-like_C_sf"/>
</dbReference>
<dbReference type="InterPro" id="IPR003180">
    <property type="entry name" value="MPG"/>
</dbReference>
<dbReference type="InterPro" id="IPR036995">
    <property type="entry name" value="MPG_sf"/>
</dbReference>
<dbReference type="NCBIfam" id="TIGR00567">
    <property type="entry name" value="3mg"/>
    <property type="match status" value="1"/>
</dbReference>
<dbReference type="PANTHER" id="PTHR10429">
    <property type="entry name" value="DNA-3-METHYLADENINE GLYCOSYLASE"/>
    <property type="match status" value="1"/>
</dbReference>
<dbReference type="PANTHER" id="PTHR10429:SF0">
    <property type="entry name" value="DNA-3-METHYLADENINE GLYCOSYLASE"/>
    <property type="match status" value="1"/>
</dbReference>
<dbReference type="Pfam" id="PF02245">
    <property type="entry name" value="Pur_DNA_glyco"/>
    <property type="match status" value="1"/>
</dbReference>
<dbReference type="SUPFAM" id="SSF50486">
    <property type="entry name" value="FMT C-terminal domain-like"/>
    <property type="match status" value="1"/>
</dbReference>
<reference key="1">
    <citation type="submission" date="2007-05" db="EMBL/GenBank/DDBJ databases">
        <title>Complete sequence of chromosome of Staphylococcus aureus subsp. aureus JH9.</title>
        <authorList>
            <consortium name="US DOE Joint Genome Institute"/>
            <person name="Copeland A."/>
            <person name="Lucas S."/>
            <person name="Lapidus A."/>
            <person name="Barry K."/>
            <person name="Detter J.C."/>
            <person name="Glavina del Rio T."/>
            <person name="Hammon N."/>
            <person name="Israni S."/>
            <person name="Pitluck S."/>
            <person name="Chain P."/>
            <person name="Malfatti S."/>
            <person name="Shin M."/>
            <person name="Vergez L."/>
            <person name="Schmutz J."/>
            <person name="Larimer F."/>
            <person name="Land M."/>
            <person name="Hauser L."/>
            <person name="Kyrpides N."/>
            <person name="Kim E."/>
            <person name="Tomasz A."/>
            <person name="Richardson P."/>
        </authorList>
    </citation>
    <scope>NUCLEOTIDE SEQUENCE [LARGE SCALE GENOMIC DNA]</scope>
    <source>
        <strain>JH9</strain>
    </source>
</reference>
<evidence type="ECO:0000255" key="1">
    <source>
        <dbReference type="HAMAP-Rule" id="MF_00527"/>
    </source>
</evidence>
<organism>
    <name type="scientific">Staphylococcus aureus (strain JH9)</name>
    <dbReference type="NCBI Taxonomy" id="359786"/>
    <lineage>
        <taxon>Bacteria</taxon>
        <taxon>Bacillati</taxon>
        <taxon>Bacillota</taxon>
        <taxon>Bacilli</taxon>
        <taxon>Bacillales</taxon>
        <taxon>Staphylococcaceae</taxon>
        <taxon>Staphylococcus</taxon>
    </lineage>
</organism>
<protein>
    <recommendedName>
        <fullName evidence="1">Putative 3-methyladenine DNA glycosylase</fullName>
        <ecNumber evidence="1">3.2.2.-</ecNumber>
    </recommendedName>
</protein>
<gene>
    <name type="ordered locus">SaurJH9_2368</name>
</gene>
<accession>A5IVC5</accession>
<sequence length="202" mass="22771">MDFVNNDTRQIAKNLLGVKVIYQDTTQTYTGYIVETEAYLGLNDRAAHGYGGKITPKVTSLYKRGGTIYAHVMHTHLLINFVTKSEGIPEGVLIRAIEPEEGLSAMFRNRGKKGYEVTNGPGKWTKAFNIPRAIDGATLNDCRLSIDTKNRKYPKDIIASPRIGIPNKGDWTHKSLRYTVKGNPFVSRMRKSDCMFPEDTWK</sequence>
<name>3MGH_STAA9</name>
<proteinExistence type="inferred from homology"/>
<feature type="chain" id="PRO_1000081705" description="Putative 3-methyladenine DNA glycosylase">
    <location>
        <begin position="1"/>
        <end position="202"/>
    </location>
</feature>
<comment type="similarity">
    <text evidence="1">Belongs to the DNA glycosylase MPG family.</text>
</comment>
<keyword id="KW-0227">DNA damage</keyword>
<keyword id="KW-0234">DNA repair</keyword>
<keyword id="KW-0378">Hydrolase</keyword>